<protein>
    <recommendedName>
        <fullName>Plastocyanin</fullName>
    </recommendedName>
</protein>
<organism>
    <name type="scientific">Scenedesmus fuscus</name>
    <name type="common">Green alga</name>
    <name type="synonym">Chlorella fusca</name>
    <dbReference type="NCBI Taxonomy" id="3073"/>
    <lineage>
        <taxon>Eukaryota</taxon>
        <taxon>Viridiplantae</taxon>
        <taxon>Chlorophyta</taxon>
        <taxon>core chlorophytes</taxon>
        <taxon>Chlorophyceae</taxon>
        <taxon>CS clade</taxon>
        <taxon>Sphaeropleales</taxon>
        <taxon>Scenedesmaceae</taxon>
        <taxon>Scenedesmus</taxon>
    </lineage>
</organism>
<proteinExistence type="evidence at protein level"/>
<sequence>DVTVKLGADSGALVFEPSSVTIKAGETVTWVNNAGFPHNIVFDEDEVPSGANAEALSHEDYLNAPGESYSAKFDTAGTYGYFCEPHQGAGMKGTITVQ</sequence>
<keyword id="KW-0150">Chloroplast</keyword>
<keyword id="KW-0186">Copper</keyword>
<keyword id="KW-0903">Direct protein sequencing</keyword>
<keyword id="KW-0249">Electron transport</keyword>
<keyword id="KW-0472">Membrane</keyword>
<keyword id="KW-0479">Metal-binding</keyword>
<keyword id="KW-0934">Plastid</keyword>
<keyword id="KW-0793">Thylakoid</keyword>
<keyword id="KW-0813">Transport</keyword>
<reference key="1">
    <citation type="journal article" date="1974" name="Biochem. J.">
        <title>The amino acid sequence of plastocyanin from Chlorella fusca.</title>
        <authorList>
            <person name="Kelly J."/>
            <person name="Ambler R.P."/>
        </authorList>
    </citation>
    <scope>PROTEIN SEQUENCE</scope>
    <scope>SUBCELLULAR LOCATION</scope>
    <source>
        <strain>Krauss strain Tokugawa/Tokyo 27</strain>
    </source>
</reference>
<feature type="chain" id="PRO_0000085561" description="Plastocyanin">
    <location>
        <begin position="1"/>
        <end position="98"/>
    </location>
</feature>
<feature type="domain" description="Plastocyanin-like">
    <location>
        <begin position="1"/>
        <end position="98"/>
    </location>
</feature>
<feature type="binding site" evidence="1">
    <location>
        <position position="38"/>
    </location>
    <ligand>
        <name>Cu cation</name>
        <dbReference type="ChEBI" id="CHEBI:23378"/>
    </ligand>
</feature>
<feature type="binding site" evidence="1">
    <location>
        <position position="83"/>
    </location>
    <ligand>
        <name>Cu cation</name>
        <dbReference type="ChEBI" id="CHEBI:23378"/>
    </ligand>
</feature>
<feature type="binding site" evidence="1">
    <location>
        <position position="86"/>
    </location>
    <ligand>
        <name>Cu cation</name>
        <dbReference type="ChEBI" id="CHEBI:23378"/>
    </ligand>
</feature>
<feature type="binding site" evidence="1">
    <location>
        <position position="91"/>
    </location>
    <ligand>
        <name>Cu cation</name>
        <dbReference type="ChEBI" id="CHEBI:23378"/>
    </ligand>
</feature>
<name>PLAS_SCEFU</name>
<gene>
    <name type="primary">petE</name>
</gene>
<dbReference type="PIR" id="A00310">
    <property type="entry name" value="CUKLCF"/>
</dbReference>
<dbReference type="SMR" id="P00300"/>
<dbReference type="GO" id="GO:0009543">
    <property type="term" value="C:chloroplast thylakoid lumen"/>
    <property type="evidence" value="ECO:0007669"/>
    <property type="project" value="TreeGrafter"/>
</dbReference>
<dbReference type="GO" id="GO:0009535">
    <property type="term" value="C:chloroplast thylakoid membrane"/>
    <property type="evidence" value="ECO:0007669"/>
    <property type="project" value="UniProtKB-SubCell"/>
</dbReference>
<dbReference type="GO" id="GO:0005507">
    <property type="term" value="F:copper ion binding"/>
    <property type="evidence" value="ECO:0007669"/>
    <property type="project" value="InterPro"/>
</dbReference>
<dbReference type="GO" id="GO:0046028">
    <property type="term" value="F:electron transporter, transferring electrons from cytochrome b6/f complex of photosystem II activity"/>
    <property type="evidence" value="ECO:0007669"/>
    <property type="project" value="TreeGrafter"/>
</dbReference>
<dbReference type="CDD" id="cd04219">
    <property type="entry name" value="Plastocyanin"/>
    <property type="match status" value="1"/>
</dbReference>
<dbReference type="Gene3D" id="2.60.40.420">
    <property type="entry name" value="Cupredoxins - blue copper proteins"/>
    <property type="match status" value="1"/>
</dbReference>
<dbReference type="InterPro" id="IPR000923">
    <property type="entry name" value="BlueCu_1"/>
</dbReference>
<dbReference type="InterPro" id="IPR028871">
    <property type="entry name" value="BlueCu_1_BS"/>
</dbReference>
<dbReference type="InterPro" id="IPR001235">
    <property type="entry name" value="Copper_blue_Plastocyanin"/>
</dbReference>
<dbReference type="InterPro" id="IPR008972">
    <property type="entry name" value="Cupredoxin"/>
</dbReference>
<dbReference type="InterPro" id="IPR002387">
    <property type="entry name" value="Plastocyanin"/>
</dbReference>
<dbReference type="NCBIfam" id="TIGR02656">
    <property type="entry name" value="cyanin_plasto"/>
    <property type="match status" value="1"/>
</dbReference>
<dbReference type="PANTHER" id="PTHR34192">
    <property type="entry name" value="PLASTOCYANIN MAJOR ISOFORM, CHLOROPLASTIC-RELATED"/>
    <property type="match status" value="1"/>
</dbReference>
<dbReference type="PANTHER" id="PTHR34192:SF10">
    <property type="entry name" value="PLASTOCYANIN MAJOR ISOFORM, CHLOROPLASTIC-RELATED"/>
    <property type="match status" value="1"/>
</dbReference>
<dbReference type="Pfam" id="PF00127">
    <property type="entry name" value="Copper-bind"/>
    <property type="match status" value="1"/>
</dbReference>
<dbReference type="PRINTS" id="PR00156">
    <property type="entry name" value="COPPERBLUE"/>
</dbReference>
<dbReference type="PRINTS" id="PR00157">
    <property type="entry name" value="PLASTOCYANIN"/>
</dbReference>
<dbReference type="SUPFAM" id="SSF49503">
    <property type="entry name" value="Cupredoxins"/>
    <property type="match status" value="1"/>
</dbReference>
<dbReference type="PROSITE" id="PS00196">
    <property type="entry name" value="COPPER_BLUE"/>
    <property type="match status" value="1"/>
</dbReference>
<comment type="function">
    <text>Participates in electron transfer between P700 and the cytochrome b6-f complex in photosystem I.</text>
</comment>
<comment type="cofactor">
    <cofactor evidence="1">
        <name>Cu(2+)</name>
        <dbReference type="ChEBI" id="CHEBI:29036"/>
    </cofactor>
</comment>
<comment type="subcellular location">
    <subcellularLocation>
        <location evidence="2">Plastid</location>
        <location evidence="2">Chloroplast thylakoid membrane</location>
        <topology>Peripheral membrane protein</topology>
        <orientation>Lumenal side</orientation>
    </subcellularLocation>
    <text>Loosely bound to the inner thylakoid membrane surface in chloroplasts.</text>
</comment>
<comment type="similarity">
    <text evidence="3">Belongs to the plastocyanin family.</text>
</comment>
<accession>P00300</accession>
<evidence type="ECO:0000250" key="1">
    <source>
        <dbReference type="UniProtKB" id="P18068"/>
    </source>
</evidence>
<evidence type="ECO:0000269" key="2">
    <source>
    </source>
</evidence>
<evidence type="ECO:0000305" key="3"/>